<organism>
    <name type="scientific">Escherichia coli (strain K12)</name>
    <dbReference type="NCBI Taxonomy" id="83333"/>
    <lineage>
        <taxon>Bacteria</taxon>
        <taxon>Pseudomonadati</taxon>
        <taxon>Pseudomonadota</taxon>
        <taxon>Gammaproteobacteria</taxon>
        <taxon>Enterobacterales</taxon>
        <taxon>Enterobacteriaceae</taxon>
        <taxon>Escherichia</taxon>
    </lineage>
</organism>
<accession>P75917</accession>
<proteinExistence type="evidence at transcript level"/>
<protein>
    <recommendedName>
        <fullName>Uncharacterized protein YmdA</fullName>
    </recommendedName>
</protein>
<sequence>MFRPFLNSLMLGSLFFPFIAIAGSTVQGGVIHFYGQIVEPACDVSTQSSPVEMNCPQNGSIPGKTYSSKALMSGNVKNAQIASVKVQYLDKQKKLAVMNIEYN</sequence>
<keyword id="KW-1185">Reference proteome</keyword>
<keyword id="KW-0732">Signal</keyword>
<dbReference type="EMBL" id="U00096">
    <property type="protein sequence ID" value="AAC74128.1"/>
    <property type="molecule type" value="Genomic_DNA"/>
</dbReference>
<dbReference type="EMBL" id="AP009048">
    <property type="protein sequence ID" value="BAA35834.1"/>
    <property type="molecule type" value="Genomic_DNA"/>
</dbReference>
<dbReference type="PIR" id="A64847">
    <property type="entry name" value="A64847"/>
</dbReference>
<dbReference type="RefSeq" id="NP_415562.1">
    <property type="nucleotide sequence ID" value="NC_000913.3"/>
</dbReference>
<dbReference type="RefSeq" id="WP_000489587.1">
    <property type="nucleotide sequence ID" value="NZ_SSZK01000058.1"/>
</dbReference>
<dbReference type="FunCoup" id="P75917">
    <property type="interactions" value="14"/>
</dbReference>
<dbReference type="STRING" id="511145.b1044"/>
<dbReference type="PaxDb" id="511145-b1044"/>
<dbReference type="EnsemblBacteria" id="AAC74128">
    <property type="protein sequence ID" value="AAC74128"/>
    <property type="gene ID" value="b1044"/>
</dbReference>
<dbReference type="GeneID" id="75203632"/>
<dbReference type="GeneID" id="949012"/>
<dbReference type="KEGG" id="ecj:JW1031"/>
<dbReference type="KEGG" id="eco:b1044"/>
<dbReference type="KEGG" id="ecoc:C3026_06355"/>
<dbReference type="PATRIC" id="fig|511145.12.peg.1085"/>
<dbReference type="EchoBASE" id="EB3632"/>
<dbReference type="eggNOG" id="ENOG50308WD">
    <property type="taxonomic scope" value="Bacteria"/>
</dbReference>
<dbReference type="HOGENOM" id="CLU_155233_3_1_6"/>
<dbReference type="InParanoid" id="P75917"/>
<dbReference type="OMA" id="PCEISAR"/>
<dbReference type="OrthoDB" id="6046808at2"/>
<dbReference type="PhylomeDB" id="P75917"/>
<dbReference type="BioCyc" id="EcoCyc:G6549-MONOMER"/>
<dbReference type="PRO" id="PR:P75917"/>
<dbReference type="Proteomes" id="UP000000625">
    <property type="component" value="Chromosome"/>
</dbReference>
<dbReference type="GO" id="GO:0044010">
    <property type="term" value="P:single-species biofilm formation"/>
    <property type="evidence" value="ECO:0000315"/>
    <property type="project" value="EcoCyc"/>
</dbReference>
<evidence type="ECO:0000255" key="1"/>
<evidence type="ECO:0000269" key="2">
    <source>
    </source>
</evidence>
<evidence type="ECO:0000305" key="3"/>
<comment type="induction">
    <text evidence="2">Under control of the CsgD transcription factor, part of the csgBAC/ymdA operon.</text>
</comment>
<comment type="similarity">
    <text evidence="3">To the N-terminal of the FimA/PapA family of fimbria proteins.</text>
</comment>
<gene>
    <name type="primary">ymdA</name>
    <name type="ordered locus">b1044</name>
    <name type="ordered locus">JW1031</name>
</gene>
<name>YMDA_ECOLI</name>
<reference key="1">
    <citation type="journal article" date="1996" name="DNA Res.">
        <title>A 718-kb DNA sequence of the Escherichia coli K-12 genome corresponding to the 12.7-28.0 min region on the linkage map.</title>
        <authorList>
            <person name="Oshima T."/>
            <person name="Aiba H."/>
            <person name="Baba T."/>
            <person name="Fujita K."/>
            <person name="Hayashi K."/>
            <person name="Honjo A."/>
            <person name="Ikemoto K."/>
            <person name="Inada T."/>
            <person name="Itoh T."/>
            <person name="Kajihara M."/>
            <person name="Kanai K."/>
            <person name="Kashimoto K."/>
            <person name="Kimura S."/>
            <person name="Kitagawa M."/>
            <person name="Makino K."/>
            <person name="Masuda S."/>
            <person name="Miki T."/>
            <person name="Mizobuchi K."/>
            <person name="Mori H."/>
            <person name="Motomura K."/>
            <person name="Nakamura Y."/>
            <person name="Nashimoto H."/>
            <person name="Nishio Y."/>
            <person name="Saito N."/>
            <person name="Sampei G."/>
            <person name="Seki Y."/>
            <person name="Tagami H."/>
            <person name="Takemoto K."/>
            <person name="Wada C."/>
            <person name="Yamamoto Y."/>
            <person name="Yano M."/>
            <person name="Horiuchi T."/>
        </authorList>
    </citation>
    <scope>NUCLEOTIDE SEQUENCE [LARGE SCALE GENOMIC DNA]</scope>
    <source>
        <strain>K12 / W3110 / ATCC 27325 / DSM 5911</strain>
    </source>
</reference>
<reference key="2">
    <citation type="journal article" date="1997" name="Science">
        <title>The complete genome sequence of Escherichia coli K-12.</title>
        <authorList>
            <person name="Blattner F.R."/>
            <person name="Plunkett G. III"/>
            <person name="Bloch C.A."/>
            <person name="Perna N.T."/>
            <person name="Burland V."/>
            <person name="Riley M."/>
            <person name="Collado-Vides J."/>
            <person name="Glasner J.D."/>
            <person name="Rode C.K."/>
            <person name="Mayhew G.F."/>
            <person name="Gregor J."/>
            <person name="Davis N.W."/>
            <person name="Kirkpatrick H.A."/>
            <person name="Goeden M.A."/>
            <person name="Rose D.J."/>
            <person name="Mau B."/>
            <person name="Shao Y."/>
        </authorList>
    </citation>
    <scope>NUCLEOTIDE SEQUENCE [LARGE SCALE GENOMIC DNA]</scope>
    <source>
        <strain>K12 / MG1655 / ATCC 47076</strain>
    </source>
</reference>
<reference key="3">
    <citation type="journal article" date="2006" name="Mol. Syst. Biol.">
        <title>Highly accurate genome sequences of Escherichia coli K-12 strains MG1655 and W3110.</title>
        <authorList>
            <person name="Hayashi K."/>
            <person name="Morooka N."/>
            <person name="Yamamoto Y."/>
            <person name="Fujita K."/>
            <person name="Isono K."/>
            <person name="Choi S."/>
            <person name="Ohtsubo E."/>
            <person name="Baba T."/>
            <person name="Wanner B.L."/>
            <person name="Mori H."/>
            <person name="Horiuchi T."/>
        </authorList>
    </citation>
    <scope>NUCLEOTIDE SEQUENCE [LARGE SCALE GENOMIC DNA]</scope>
    <source>
        <strain>K12 / W3110 / ATCC 27325 / DSM 5911</strain>
    </source>
</reference>
<reference key="4">
    <citation type="journal article" date="2006" name="Mol. Microbiol.">
        <title>Cyclic-di-GMP-mediated signalling within the sigma network of Escherichia coli.</title>
        <authorList>
            <person name="Weber H."/>
            <person name="Pesavento C."/>
            <person name="Possling A."/>
            <person name="Tischendorf G."/>
            <person name="Hengge R."/>
        </authorList>
    </citation>
    <scope>INDUCTION</scope>
    <scope>OPERON STRUCTURE</scope>
    <source>
        <strain>K12 / MC4100</strain>
    </source>
</reference>
<feature type="signal peptide" evidence="1">
    <location>
        <begin position="1"/>
        <end position="22"/>
    </location>
</feature>
<feature type="chain" id="PRO_0000013819" description="Uncharacterized protein YmdA">
    <location>
        <begin position="23"/>
        <end position="103"/>
    </location>
</feature>